<gene>
    <name evidence="1" type="primary">ccsA</name>
</gene>
<comment type="function">
    <text evidence="1">Required during biogenesis of c-type cytochromes (cytochrome c6 and cytochrome f) at the step of heme attachment.</text>
</comment>
<comment type="subunit">
    <text evidence="1">May interact with Ccs1.</text>
</comment>
<comment type="subcellular location">
    <subcellularLocation>
        <location evidence="1">Plastid</location>
        <location evidence="1">Chloroplast thylakoid membrane</location>
        <topology evidence="1">Multi-pass membrane protein</topology>
    </subcellularLocation>
</comment>
<comment type="similarity">
    <text evidence="1">Belongs to the CcmF/CycK/Ccl1/NrfE/CcsA family.</text>
</comment>
<proteinExistence type="inferred from homology"/>
<dbReference type="EMBL" id="DQ864733">
    <property type="protein sequence ID" value="ABI49070.1"/>
    <property type="molecule type" value="Genomic_DNA"/>
</dbReference>
<dbReference type="RefSeq" id="YP_740526.1">
    <property type="nucleotide sequence ID" value="NC_008334.1"/>
</dbReference>
<dbReference type="SMR" id="Q09MC7"/>
<dbReference type="GeneID" id="4271113"/>
<dbReference type="KEGG" id="cit:4271113"/>
<dbReference type="OrthoDB" id="861130at71240"/>
<dbReference type="GO" id="GO:0009535">
    <property type="term" value="C:chloroplast thylakoid membrane"/>
    <property type="evidence" value="ECO:0007669"/>
    <property type="project" value="UniProtKB-SubCell"/>
</dbReference>
<dbReference type="GO" id="GO:0020037">
    <property type="term" value="F:heme binding"/>
    <property type="evidence" value="ECO:0007669"/>
    <property type="project" value="InterPro"/>
</dbReference>
<dbReference type="GO" id="GO:0017004">
    <property type="term" value="P:cytochrome complex assembly"/>
    <property type="evidence" value="ECO:0007669"/>
    <property type="project" value="UniProtKB-UniRule"/>
</dbReference>
<dbReference type="HAMAP" id="MF_01391">
    <property type="entry name" value="CytC_CcsA"/>
    <property type="match status" value="1"/>
</dbReference>
<dbReference type="InterPro" id="IPR002541">
    <property type="entry name" value="Cyt_c_assembly"/>
</dbReference>
<dbReference type="InterPro" id="IPR017562">
    <property type="entry name" value="Cyt_c_biogenesis_CcsA"/>
</dbReference>
<dbReference type="InterPro" id="IPR045062">
    <property type="entry name" value="Cyt_c_biogenesis_CcsA/CcmC"/>
</dbReference>
<dbReference type="NCBIfam" id="TIGR03144">
    <property type="entry name" value="cytochr_II_ccsB"/>
    <property type="match status" value="1"/>
</dbReference>
<dbReference type="PANTHER" id="PTHR30071:SF1">
    <property type="entry name" value="CYTOCHROME B_B6 PROTEIN-RELATED"/>
    <property type="match status" value="1"/>
</dbReference>
<dbReference type="PANTHER" id="PTHR30071">
    <property type="entry name" value="HEME EXPORTER PROTEIN C"/>
    <property type="match status" value="1"/>
</dbReference>
<dbReference type="Pfam" id="PF01578">
    <property type="entry name" value="Cytochrom_C_asm"/>
    <property type="match status" value="1"/>
</dbReference>
<accession>Q09MC7</accession>
<protein>
    <recommendedName>
        <fullName evidence="1">Cytochrome c biogenesis protein CcsA</fullName>
    </recommendedName>
</protein>
<name>CCSA_CITSI</name>
<keyword id="KW-0150">Chloroplast</keyword>
<keyword id="KW-0201">Cytochrome c-type biogenesis</keyword>
<keyword id="KW-0472">Membrane</keyword>
<keyword id="KW-0934">Plastid</keyword>
<keyword id="KW-0793">Thylakoid</keyword>
<keyword id="KW-0812">Transmembrane</keyword>
<keyword id="KW-1133">Transmembrane helix</keyword>
<organism>
    <name type="scientific">Citrus sinensis</name>
    <name type="common">Sweet orange</name>
    <name type="synonym">Citrus aurantium var. sinensis</name>
    <dbReference type="NCBI Taxonomy" id="2711"/>
    <lineage>
        <taxon>Eukaryota</taxon>
        <taxon>Viridiplantae</taxon>
        <taxon>Streptophyta</taxon>
        <taxon>Embryophyta</taxon>
        <taxon>Tracheophyta</taxon>
        <taxon>Spermatophyta</taxon>
        <taxon>Magnoliopsida</taxon>
        <taxon>eudicotyledons</taxon>
        <taxon>Gunneridae</taxon>
        <taxon>Pentapetalae</taxon>
        <taxon>rosids</taxon>
        <taxon>malvids</taxon>
        <taxon>Sapindales</taxon>
        <taxon>Rutaceae</taxon>
        <taxon>Aurantioideae</taxon>
        <taxon>Citrus</taxon>
    </lineage>
</organism>
<evidence type="ECO:0000255" key="1">
    <source>
        <dbReference type="HAMAP-Rule" id="MF_01391"/>
    </source>
</evidence>
<geneLocation type="chloroplast"/>
<reference key="1">
    <citation type="journal article" date="2006" name="BMC Plant Biol.">
        <title>The complete chloroplast genome sequence of Citrus sinensis (L.) Osbeck var 'Ridge Pineapple': organization and phylogenetic relationships to other angiosperms.</title>
        <authorList>
            <person name="Bausher M.G."/>
            <person name="Singh N.D."/>
            <person name="Lee S.-B."/>
            <person name="Jansen R.K."/>
            <person name="Daniell H."/>
        </authorList>
    </citation>
    <scope>NUCLEOTIDE SEQUENCE [LARGE SCALE GENOMIC DNA]</scope>
    <source>
        <strain>cv. Osbeck var. Ridge Pineapple</strain>
    </source>
</reference>
<feature type="chain" id="PRO_0000353741" description="Cytochrome c biogenesis protein CcsA">
    <location>
        <begin position="1"/>
        <end position="317"/>
    </location>
</feature>
<feature type="transmembrane region" description="Helical" evidence="1">
    <location>
        <begin position="9"/>
        <end position="29"/>
    </location>
</feature>
<feature type="transmembrane region" description="Helical" evidence="1">
    <location>
        <begin position="46"/>
        <end position="63"/>
    </location>
</feature>
<feature type="transmembrane region" description="Helical" evidence="1">
    <location>
        <begin position="71"/>
        <end position="91"/>
    </location>
</feature>
<feature type="transmembrane region" description="Helical" evidence="1">
    <location>
        <begin position="98"/>
        <end position="118"/>
    </location>
</feature>
<feature type="transmembrane region" description="Helical" evidence="1">
    <location>
        <begin position="143"/>
        <end position="163"/>
    </location>
</feature>
<feature type="transmembrane region" description="Helical" evidence="1">
    <location>
        <begin position="225"/>
        <end position="245"/>
    </location>
</feature>
<feature type="transmembrane region" description="Helical" evidence="1">
    <location>
        <begin position="258"/>
        <end position="273"/>
    </location>
</feature>
<feature type="transmembrane region" description="Helical" evidence="1">
    <location>
        <begin position="286"/>
        <end position="306"/>
    </location>
</feature>
<sequence>MIFSTLERILTHISFSVVSIGITIYLITFLVDEIRGLYASSERGMTATAFCLTGLLITRWVYSRHFPLSDLYESLIFLSWSLSIIHKIFDFKNNQNHLSAITAPSAFFTQGFATSGFLTKMHQSRILVPALQVQWLMMHVSMMVLGYAALLCGSLLSTALLVITFRKVIRLFLKRKNFVHVNGSFCFSEIQYMNEKKNVFLNSLSARNYYRYQVIQQLDRWSYRIISLGFIFLTTGILSGAVWANEAWGSYWNWDPKETWAFITWTIFGIYLHTRTNTKWEGVNSAIVASMGFLIIWICYFGVNLLGIGLHSYGSFN</sequence>